<evidence type="ECO:0000255" key="1">
    <source>
        <dbReference type="PROSITE-ProRule" id="PRU00625"/>
    </source>
</evidence>
<evidence type="ECO:0000256" key="2">
    <source>
        <dbReference type="SAM" id="MobiDB-lite"/>
    </source>
</evidence>
<evidence type="ECO:0000269" key="3">
    <source>
    </source>
</evidence>
<evidence type="ECO:0000269" key="4">
    <source>
    </source>
</evidence>
<evidence type="ECO:0000269" key="5">
    <source>
    </source>
</evidence>
<evidence type="ECO:0000303" key="6">
    <source>
    </source>
</evidence>
<evidence type="ECO:0000303" key="7">
    <source>
    </source>
</evidence>
<evidence type="ECO:0000305" key="8"/>
<evidence type="ECO:0000312" key="9">
    <source>
        <dbReference type="Araport" id="AT5G15310"/>
    </source>
</evidence>
<evidence type="ECO:0000312" key="10">
    <source>
        <dbReference type="EMBL" id="CAB89341.1"/>
    </source>
</evidence>
<feature type="chain" id="PRO_0000439925" description="Transcription factor MYB16">
    <location>
        <begin position="1"/>
        <end position="326"/>
    </location>
</feature>
<feature type="domain" description="HTH myb-type 1" evidence="1">
    <location>
        <begin position="9"/>
        <end position="61"/>
    </location>
</feature>
<feature type="domain" description="HTH myb-type 2" evidence="1">
    <location>
        <begin position="62"/>
        <end position="116"/>
    </location>
</feature>
<feature type="DNA-binding region" description="H-T-H motif" evidence="1">
    <location>
        <begin position="37"/>
        <end position="61"/>
    </location>
</feature>
<feature type="DNA-binding region" description="H-T-H motif" evidence="1">
    <location>
        <begin position="89"/>
        <end position="112"/>
    </location>
</feature>
<feature type="region of interest" description="Disordered" evidence="2">
    <location>
        <begin position="197"/>
        <end position="217"/>
    </location>
</feature>
<feature type="region of interest" description="Disordered" evidence="2">
    <location>
        <begin position="280"/>
        <end position="299"/>
    </location>
</feature>
<feature type="compositionally biased region" description="Polar residues" evidence="2">
    <location>
        <begin position="208"/>
        <end position="217"/>
    </location>
</feature>
<feature type="compositionally biased region" description="Basic and acidic residues" evidence="2">
    <location>
        <begin position="280"/>
        <end position="290"/>
    </location>
</feature>
<sequence length="326" mass="36943">MGRSPCCDKLGLKKGPWTPEEDQKLLAYIEEHGHGSWRSLPEKAGLHRCGKSCRLRWTNYLRPDIKRGKFNLQEEQTIIQLHALLGNRWSAIATHLPKRTDNEIKNYWNTHLKKRLVKMGIDPVTHKPKNETPLSSLGLSKNAAILSHTAQWESARLEAEARLARESKLLHLQHYQTKTSSQPHHHHGFTHKSLLPNWTTKPHEDQQQLESPTSTVSFSEMKESIPAKIEFVGSSTGVTLMKEPEHDWINSTMHEFETTQMGEGIEEGFTGLLLGGDSIDRSFSGDKNETAGESSGGDCNYYEDNKNYLDSIFNFVDPSPSDSPMF</sequence>
<protein>
    <recommendedName>
        <fullName evidence="8">Transcription factor MYB16</fullName>
    </recommendedName>
    <alternativeName>
        <fullName evidence="6">Myb-related protein 16</fullName>
        <shortName evidence="6">AtMYB16</shortName>
    </alternativeName>
    <alternativeName>
        <fullName evidence="7">Protein MIXTA homolog</fullName>
        <shortName evidence="7">AtMIXTA</shortName>
    </alternativeName>
</protein>
<dbReference type="EMBL" id="AY519624">
    <property type="protein sequence ID" value="AAS10094.1"/>
    <property type="molecule type" value="mRNA"/>
</dbReference>
<dbReference type="EMBL" id="AL353993">
    <property type="protein sequence ID" value="CAB89341.1"/>
    <property type="molecule type" value="Genomic_DNA"/>
</dbReference>
<dbReference type="EMBL" id="CP002688">
    <property type="protein sequence ID" value="AED92146.1"/>
    <property type="molecule type" value="Genomic_DNA"/>
</dbReference>
<dbReference type="EMBL" id="AF370613">
    <property type="protein sequence ID" value="AAK43932.1"/>
    <property type="molecule type" value="mRNA"/>
</dbReference>
<dbReference type="EMBL" id="BT028929">
    <property type="protein sequence ID" value="ABI49476.1"/>
    <property type="molecule type" value="mRNA"/>
</dbReference>
<dbReference type="EMBL" id="AK228474">
    <property type="protein sequence ID" value="BAF00400.1"/>
    <property type="molecule type" value="mRNA"/>
</dbReference>
<dbReference type="PIR" id="T49966">
    <property type="entry name" value="T49966"/>
</dbReference>
<dbReference type="RefSeq" id="NP_197035.1">
    <property type="nucleotide sequence ID" value="NM_121535.4"/>
</dbReference>
<dbReference type="SMR" id="Q9LXF1"/>
<dbReference type="FunCoup" id="Q9LXF1">
    <property type="interactions" value="108"/>
</dbReference>
<dbReference type="STRING" id="3702.Q9LXF1"/>
<dbReference type="PaxDb" id="3702-AT5G15310.1"/>
<dbReference type="ProteomicsDB" id="251377"/>
<dbReference type="EnsemblPlants" id="AT5G15310.1">
    <property type="protein sequence ID" value="AT5G15310.1"/>
    <property type="gene ID" value="AT5G15310"/>
</dbReference>
<dbReference type="GeneID" id="831383"/>
<dbReference type="Gramene" id="AT5G15310.1">
    <property type="protein sequence ID" value="AT5G15310.1"/>
    <property type="gene ID" value="AT5G15310"/>
</dbReference>
<dbReference type="KEGG" id="ath:AT5G15310"/>
<dbReference type="Araport" id="AT5G15310"/>
<dbReference type="TAIR" id="AT5G15310">
    <property type="gene designation" value="MYB16"/>
</dbReference>
<dbReference type="eggNOG" id="KOG0048">
    <property type="taxonomic scope" value="Eukaryota"/>
</dbReference>
<dbReference type="InParanoid" id="Q9LXF1"/>
<dbReference type="OMA" id="DCNNYYE"/>
<dbReference type="PhylomeDB" id="Q9LXF1"/>
<dbReference type="PRO" id="PR:Q9LXF1"/>
<dbReference type="Proteomes" id="UP000006548">
    <property type="component" value="Chromosome 5"/>
</dbReference>
<dbReference type="ExpressionAtlas" id="Q9LXF1">
    <property type="expression patterns" value="baseline and differential"/>
</dbReference>
<dbReference type="GO" id="GO:0005634">
    <property type="term" value="C:nucleus"/>
    <property type="evidence" value="ECO:0007669"/>
    <property type="project" value="UniProtKB-SubCell"/>
</dbReference>
<dbReference type="GO" id="GO:0003677">
    <property type="term" value="F:DNA binding"/>
    <property type="evidence" value="ECO:0007669"/>
    <property type="project" value="UniProtKB-KW"/>
</dbReference>
<dbReference type="GO" id="GO:0003700">
    <property type="term" value="F:DNA-binding transcription factor activity"/>
    <property type="evidence" value="ECO:0000250"/>
    <property type="project" value="TAIR"/>
</dbReference>
<dbReference type="GO" id="GO:0000902">
    <property type="term" value="P:cell morphogenesis"/>
    <property type="evidence" value="ECO:0000315"/>
    <property type="project" value="UniProtKB"/>
</dbReference>
<dbReference type="GO" id="GO:0035017">
    <property type="term" value="P:cuticle pattern formation"/>
    <property type="evidence" value="ECO:0000315"/>
    <property type="project" value="UniProtKB"/>
</dbReference>
<dbReference type="GO" id="GO:1901957">
    <property type="term" value="P:regulation of cutin biosynthetic process"/>
    <property type="evidence" value="ECO:0000315"/>
    <property type="project" value="UniProtKB"/>
</dbReference>
<dbReference type="CDD" id="cd00167">
    <property type="entry name" value="SANT"/>
    <property type="match status" value="2"/>
</dbReference>
<dbReference type="FunFam" id="1.10.10.60:FF:000099">
    <property type="entry name" value="MYB transcription factor"/>
    <property type="match status" value="1"/>
</dbReference>
<dbReference type="FunFam" id="1.10.10.60:FF:000001">
    <property type="entry name" value="MYB-related transcription factor"/>
    <property type="match status" value="1"/>
</dbReference>
<dbReference type="Gene3D" id="1.10.10.60">
    <property type="entry name" value="Homeodomain-like"/>
    <property type="match status" value="2"/>
</dbReference>
<dbReference type="InterPro" id="IPR009057">
    <property type="entry name" value="Homeodomain-like_sf"/>
</dbReference>
<dbReference type="InterPro" id="IPR017930">
    <property type="entry name" value="Myb_dom"/>
</dbReference>
<dbReference type="InterPro" id="IPR015495">
    <property type="entry name" value="Myb_TF_plants"/>
</dbReference>
<dbReference type="InterPro" id="IPR001005">
    <property type="entry name" value="SANT/Myb"/>
</dbReference>
<dbReference type="PANTHER" id="PTHR10641">
    <property type="entry name" value="MYB FAMILY TRANSCRIPTION FACTOR"/>
    <property type="match status" value="1"/>
</dbReference>
<dbReference type="PANTHER" id="PTHR10641:SF586">
    <property type="entry name" value="TRANSCRIPTION FACTOR MYB16"/>
    <property type="match status" value="1"/>
</dbReference>
<dbReference type="Pfam" id="PF00249">
    <property type="entry name" value="Myb_DNA-binding"/>
    <property type="match status" value="2"/>
</dbReference>
<dbReference type="SMART" id="SM00717">
    <property type="entry name" value="SANT"/>
    <property type="match status" value="2"/>
</dbReference>
<dbReference type="SUPFAM" id="SSF46689">
    <property type="entry name" value="Homeodomain-like"/>
    <property type="match status" value="1"/>
</dbReference>
<dbReference type="PROSITE" id="PS51294">
    <property type="entry name" value="HTH_MYB"/>
    <property type="match status" value="2"/>
</dbReference>
<name>MYB16_ARATH</name>
<keyword id="KW-0217">Developmental protein</keyword>
<keyword id="KW-0238">DNA-binding</keyword>
<keyword id="KW-0539">Nucleus</keyword>
<keyword id="KW-1185">Reference proteome</keyword>
<keyword id="KW-0677">Repeat</keyword>
<keyword id="KW-0804">Transcription</keyword>
<keyword id="KW-0805">Transcription regulation</keyword>
<reference key="1">
    <citation type="submission" date="2004-01" db="EMBL/GenBank/DDBJ databases">
        <title>The MYB transcription factor family in Arabidopsis: a genome-wide cloning and expression pattern analysis.</title>
        <authorList>
            <person name="Qu L."/>
            <person name="Gu H."/>
        </authorList>
    </citation>
    <scope>NUCLEOTIDE SEQUENCE [MRNA]</scope>
</reference>
<reference key="2">
    <citation type="journal article" date="2000" name="Nature">
        <title>Sequence and analysis of chromosome 5 of the plant Arabidopsis thaliana.</title>
        <authorList>
            <person name="Tabata S."/>
            <person name="Kaneko T."/>
            <person name="Nakamura Y."/>
            <person name="Kotani H."/>
            <person name="Kato T."/>
            <person name="Asamizu E."/>
            <person name="Miyajima N."/>
            <person name="Sasamoto S."/>
            <person name="Kimura T."/>
            <person name="Hosouchi T."/>
            <person name="Kawashima K."/>
            <person name="Kohara M."/>
            <person name="Matsumoto M."/>
            <person name="Matsuno A."/>
            <person name="Muraki A."/>
            <person name="Nakayama S."/>
            <person name="Nakazaki N."/>
            <person name="Naruo K."/>
            <person name="Okumura S."/>
            <person name="Shinpo S."/>
            <person name="Takeuchi C."/>
            <person name="Wada T."/>
            <person name="Watanabe A."/>
            <person name="Yamada M."/>
            <person name="Yasuda M."/>
            <person name="Sato S."/>
            <person name="de la Bastide M."/>
            <person name="Huang E."/>
            <person name="Spiegel L."/>
            <person name="Gnoj L."/>
            <person name="O'Shaughnessy A."/>
            <person name="Preston R."/>
            <person name="Habermann K."/>
            <person name="Murray J."/>
            <person name="Johnson D."/>
            <person name="Rohlfing T."/>
            <person name="Nelson J."/>
            <person name="Stoneking T."/>
            <person name="Pepin K."/>
            <person name="Spieth J."/>
            <person name="Sekhon M."/>
            <person name="Armstrong J."/>
            <person name="Becker M."/>
            <person name="Belter E."/>
            <person name="Cordum H."/>
            <person name="Cordes M."/>
            <person name="Courtney L."/>
            <person name="Courtney W."/>
            <person name="Dante M."/>
            <person name="Du H."/>
            <person name="Edwards J."/>
            <person name="Fryman J."/>
            <person name="Haakensen B."/>
            <person name="Lamar E."/>
            <person name="Latreille P."/>
            <person name="Leonard S."/>
            <person name="Meyer R."/>
            <person name="Mulvaney E."/>
            <person name="Ozersky P."/>
            <person name="Riley A."/>
            <person name="Strowmatt C."/>
            <person name="Wagner-McPherson C."/>
            <person name="Wollam A."/>
            <person name="Yoakum M."/>
            <person name="Bell M."/>
            <person name="Dedhia N."/>
            <person name="Parnell L."/>
            <person name="Shah R."/>
            <person name="Rodriguez M."/>
            <person name="Hoon See L."/>
            <person name="Vil D."/>
            <person name="Baker J."/>
            <person name="Kirchoff K."/>
            <person name="Toth K."/>
            <person name="King L."/>
            <person name="Bahret A."/>
            <person name="Miller B."/>
            <person name="Marra M.A."/>
            <person name="Martienssen R."/>
            <person name="McCombie W.R."/>
            <person name="Wilson R.K."/>
            <person name="Murphy G."/>
            <person name="Bancroft I."/>
            <person name="Volckaert G."/>
            <person name="Wambutt R."/>
            <person name="Duesterhoeft A."/>
            <person name="Stiekema W."/>
            <person name="Pohl T."/>
            <person name="Entian K.-D."/>
            <person name="Terryn N."/>
            <person name="Hartley N."/>
            <person name="Bent E."/>
            <person name="Johnson S."/>
            <person name="Langham S.-A."/>
            <person name="McCullagh B."/>
            <person name="Robben J."/>
            <person name="Grymonprez B."/>
            <person name="Zimmermann W."/>
            <person name="Ramsperger U."/>
            <person name="Wedler H."/>
            <person name="Balke K."/>
            <person name="Wedler E."/>
            <person name="Peters S."/>
            <person name="van Staveren M."/>
            <person name="Dirkse W."/>
            <person name="Mooijman P."/>
            <person name="Klein Lankhorst R."/>
            <person name="Weitzenegger T."/>
            <person name="Bothe G."/>
            <person name="Rose M."/>
            <person name="Hauf J."/>
            <person name="Berneiser S."/>
            <person name="Hempel S."/>
            <person name="Feldpausch M."/>
            <person name="Lamberth S."/>
            <person name="Villarroel R."/>
            <person name="Gielen J."/>
            <person name="Ardiles W."/>
            <person name="Bents O."/>
            <person name="Lemcke K."/>
            <person name="Kolesov G."/>
            <person name="Mayer K.F.X."/>
            <person name="Rudd S."/>
            <person name="Schoof H."/>
            <person name="Schueller C."/>
            <person name="Zaccaria P."/>
            <person name="Mewes H.-W."/>
            <person name="Bevan M."/>
            <person name="Fransz P.F."/>
        </authorList>
    </citation>
    <scope>NUCLEOTIDE SEQUENCE [LARGE SCALE GENOMIC DNA]</scope>
    <source>
        <strain>cv. Columbia</strain>
    </source>
</reference>
<reference key="3">
    <citation type="journal article" date="2017" name="Plant J.">
        <title>Araport11: a complete reannotation of the Arabidopsis thaliana reference genome.</title>
        <authorList>
            <person name="Cheng C.Y."/>
            <person name="Krishnakumar V."/>
            <person name="Chan A.P."/>
            <person name="Thibaud-Nissen F."/>
            <person name="Schobel S."/>
            <person name="Town C.D."/>
        </authorList>
    </citation>
    <scope>GENOME REANNOTATION</scope>
    <source>
        <strain>cv. Columbia</strain>
    </source>
</reference>
<reference key="4">
    <citation type="submission" date="2006-07" db="EMBL/GenBank/DDBJ databases">
        <title>Large-scale analysis of RIKEN Arabidopsis full-length (RAFL) cDNAs.</title>
        <authorList>
            <person name="Totoki Y."/>
            <person name="Seki M."/>
            <person name="Ishida J."/>
            <person name="Nakajima M."/>
            <person name="Enju A."/>
            <person name="Kamiya A."/>
            <person name="Narusaka M."/>
            <person name="Shin-i T."/>
            <person name="Nakagawa M."/>
            <person name="Sakamoto N."/>
            <person name="Oishi K."/>
            <person name="Kohara Y."/>
            <person name="Kobayashi M."/>
            <person name="Toyoda A."/>
            <person name="Sakaki Y."/>
            <person name="Sakurai T."/>
            <person name="Iida K."/>
            <person name="Akiyama K."/>
            <person name="Satou M."/>
            <person name="Toyoda T."/>
            <person name="Konagaya A."/>
            <person name="Carninci P."/>
            <person name="Kawai J."/>
            <person name="Hayashizaki Y."/>
            <person name="Shinozaki K."/>
        </authorList>
    </citation>
    <scope>NUCLEOTIDE SEQUENCE [LARGE SCALE MRNA]</scope>
    <source>
        <strain>cv. Columbia</strain>
    </source>
</reference>
<reference key="5">
    <citation type="submission" date="2006-09" db="EMBL/GenBank/DDBJ databases">
        <title>Arabidopsis ORF clones.</title>
        <authorList>
            <person name="Quinitio C."/>
            <person name="Chen H."/>
            <person name="Kim C.J."/>
            <person name="Shinn P."/>
            <person name="Ecker J.R."/>
        </authorList>
    </citation>
    <scope>NUCLEOTIDE SEQUENCE [LARGE SCALE MRNA]</scope>
    <source>
        <strain>cv. Columbia</strain>
    </source>
</reference>
<reference key="6">
    <citation type="journal article" date="2001" name="Curr. Opin. Plant Biol.">
        <title>The R2R3-MYB gene family in Arabidopsis thaliana.</title>
        <authorList>
            <person name="Stracke R."/>
            <person name="Werber M."/>
            <person name="Weisshaar B."/>
        </authorList>
    </citation>
    <scope>GENE FAMILY</scope>
    <scope>NOMENCLATURE</scope>
</reference>
<reference key="7">
    <citation type="journal article" date="2007" name="Development">
        <title>Control of cell and petal morphogenesis by R2R3 MYB transcription factors.</title>
        <authorList>
            <person name="Baumann K."/>
            <person name="Perez-Rodriguez M."/>
            <person name="Bradley D."/>
            <person name="Venail J."/>
            <person name="Bailey P."/>
            <person name="Jin H."/>
            <person name="Koes R."/>
            <person name="Roberts K."/>
            <person name="Martin C."/>
        </authorList>
    </citation>
    <scope>FUNCTION</scope>
</reference>
<reference key="8">
    <citation type="journal article" date="2013" name="Plant Cell">
        <title>MIXTA-like transcription factors and WAX INDUCER1/SHINE1 coordinately regulate cuticle development in Arabidopsis and Torenia fournieri.</title>
        <authorList>
            <person name="Oshima Y."/>
            <person name="Shikata M."/>
            <person name="Koyama T."/>
            <person name="Ohtsubo N."/>
            <person name="Mitsuda N."/>
            <person name="Ohme-Takagi M."/>
        </authorList>
    </citation>
    <scope>FUNCTION</scope>
    <scope>TISSUE SPECIFICITY</scope>
</reference>
<reference key="9">
    <citation type="journal article" date="2013" name="Plant Signal. Behav.">
        <title>The MIXTA-like transcription factor MYB16 is a major regulator of cuticle formation in vegetative organs.</title>
        <authorList>
            <person name="Oshima Y."/>
            <person name="Mitsuda N."/>
        </authorList>
    </citation>
    <scope>FUNCTION</scope>
</reference>
<accession>Q9LXF1</accession>
<proteinExistence type="evidence at transcript level"/>
<gene>
    <name evidence="6" type="primary">MYB16</name>
    <name evidence="9" type="ordered locus">At5g15310</name>
    <name evidence="10" type="ORF">F8M21_200</name>
</gene>
<comment type="function">
    <text evidence="3 4 5">Involved in the control of epidermal cell morphogenesis in petals. Promotes unidirectional cell expansion once outgrowth has been initiated (PubMed:17376813). Coordinately with WIN1/SHN1, participates in the regulation of cuticle biosynthesis and wax accumulation in reproductive organs and trichomes. Functions in cuticle nanoridge formation in petals and stamens, and in morphogenesis of petal conical cells and trichomes (PubMed:23709630). Functions as a major regulator of cuticle formation in vegetative organs by regulating the cuticle biosynthesis genes CYP86A8/LCR and CER1 (PubMed:24169067).</text>
</comment>
<comment type="subcellular location">
    <subcellularLocation>
        <location evidence="1">Nucleus</location>
    </subcellularLocation>
</comment>
<comment type="tissue specificity">
    <text evidence="4">Expressed in trichomes, epidermis and mesophyll cells of young leaves, stems, petals, sepals, carpels and stamens.</text>
</comment>
<organism>
    <name type="scientific">Arabidopsis thaliana</name>
    <name type="common">Mouse-ear cress</name>
    <dbReference type="NCBI Taxonomy" id="3702"/>
    <lineage>
        <taxon>Eukaryota</taxon>
        <taxon>Viridiplantae</taxon>
        <taxon>Streptophyta</taxon>
        <taxon>Embryophyta</taxon>
        <taxon>Tracheophyta</taxon>
        <taxon>Spermatophyta</taxon>
        <taxon>Magnoliopsida</taxon>
        <taxon>eudicotyledons</taxon>
        <taxon>Gunneridae</taxon>
        <taxon>Pentapetalae</taxon>
        <taxon>rosids</taxon>
        <taxon>malvids</taxon>
        <taxon>Brassicales</taxon>
        <taxon>Brassicaceae</taxon>
        <taxon>Camelineae</taxon>
        <taxon>Arabidopsis</taxon>
    </lineage>
</organism>